<organism>
    <name type="scientific">Streptococcus pyogenes serotype M1</name>
    <dbReference type="NCBI Taxonomy" id="301447"/>
    <lineage>
        <taxon>Bacteria</taxon>
        <taxon>Bacillati</taxon>
        <taxon>Bacillota</taxon>
        <taxon>Bacilli</taxon>
        <taxon>Lactobacillales</taxon>
        <taxon>Streptococcaceae</taxon>
        <taxon>Streptococcus</taxon>
    </lineage>
</organism>
<dbReference type="EC" id="5.1.1.1" evidence="1"/>
<dbReference type="EMBL" id="AE004092">
    <property type="protein sequence ID" value="AAK34532.1"/>
    <property type="molecule type" value="Genomic_DNA"/>
</dbReference>
<dbReference type="EMBL" id="CP000017">
    <property type="protein sequence ID" value="AAZ52150.1"/>
    <property type="molecule type" value="Genomic_DNA"/>
</dbReference>
<dbReference type="RefSeq" id="NP_269811.1">
    <property type="nucleotide sequence ID" value="NC_002737.2"/>
</dbReference>
<dbReference type="SMR" id="Q99Y98"/>
<dbReference type="PaxDb" id="1314-HKU360_01583"/>
<dbReference type="KEGG" id="spy:SPy_1802"/>
<dbReference type="KEGG" id="spz:M5005_Spy1532"/>
<dbReference type="PATRIC" id="fig|160490.10.peg.1568"/>
<dbReference type="HOGENOM" id="CLU_028393_2_1_9"/>
<dbReference type="OMA" id="WEILCGF"/>
<dbReference type="UniPathway" id="UPA00042">
    <property type="reaction ID" value="UER00497"/>
</dbReference>
<dbReference type="Proteomes" id="UP000000750">
    <property type="component" value="Chromosome"/>
</dbReference>
<dbReference type="GO" id="GO:0005829">
    <property type="term" value="C:cytosol"/>
    <property type="evidence" value="ECO:0007669"/>
    <property type="project" value="TreeGrafter"/>
</dbReference>
<dbReference type="GO" id="GO:0008784">
    <property type="term" value="F:alanine racemase activity"/>
    <property type="evidence" value="ECO:0007669"/>
    <property type="project" value="UniProtKB-UniRule"/>
</dbReference>
<dbReference type="GO" id="GO:0030170">
    <property type="term" value="F:pyridoxal phosphate binding"/>
    <property type="evidence" value="ECO:0007669"/>
    <property type="project" value="UniProtKB-UniRule"/>
</dbReference>
<dbReference type="GO" id="GO:0030632">
    <property type="term" value="P:D-alanine biosynthetic process"/>
    <property type="evidence" value="ECO:0007669"/>
    <property type="project" value="UniProtKB-UniRule"/>
</dbReference>
<dbReference type="GO" id="GO:0009252">
    <property type="term" value="P:peptidoglycan biosynthetic process"/>
    <property type="evidence" value="ECO:0007669"/>
    <property type="project" value="TreeGrafter"/>
</dbReference>
<dbReference type="CDD" id="cd00430">
    <property type="entry name" value="PLPDE_III_AR"/>
    <property type="match status" value="1"/>
</dbReference>
<dbReference type="FunFam" id="2.40.37.10:FF:000006">
    <property type="entry name" value="Alanine racemase"/>
    <property type="match status" value="1"/>
</dbReference>
<dbReference type="FunFam" id="3.20.20.10:FF:000002">
    <property type="entry name" value="Alanine racemase"/>
    <property type="match status" value="1"/>
</dbReference>
<dbReference type="Gene3D" id="3.20.20.10">
    <property type="entry name" value="Alanine racemase"/>
    <property type="match status" value="1"/>
</dbReference>
<dbReference type="Gene3D" id="2.40.37.10">
    <property type="entry name" value="Lyase, Ornithine Decarboxylase, Chain A, domain 1"/>
    <property type="match status" value="1"/>
</dbReference>
<dbReference type="HAMAP" id="MF_01201">
    <property type="entry name" value="Ala_racemase"/>
    <property type="match status" value="1"/>
</dbReference>
<dbReference type="InterPro" id="IPR000821">
    <property type="entry name" value="Ala_racemase"/>
</dbReference>
<dbReference type="InterPro" id="IPR009006">
    <property type="entry name" value="Ala_racemase/Decarboxylase_C"/>
</dbReference>
<dbReference type="InterPro" id="IPR011079">
    <property type="entry name" value="Ala_racemase_C"/>
</dbReference>
<dbReference type="InterPro" id="IPR001608">
    <property type="entry name" value="Ala_racemase_N"/>
</dbReference>
<dbReference type="InterPro" id="IPR020622">
    <property type="entry name" value="Ala_racemase_pyridoxalP-BS"/>
</dbReference>
<dbReference type="InterPro" id="IPR029066">
    <property type="entry name" value="PLP-binding_barrel"/>
</dbReference>
<dbReference type="NCBIfam" id="TIGR00492">
    <property type="entry name" value="alr"/>
    <property type="match status" value="1"/>
</dbReference>
<dbReference type="PANTHER" id="PTHR30511">
    <property type="entry name" value="ALANINE RACEMASE"/>
    <property type="match status" value="1"/>
</dbReference>
<dbReference type="PANTHER" id="PTHR30511:SF0">
    <property type="entry name" value="ALANINE RACEMASE, CATABOLIC-RELATED"/>
    <property type="match status" value="1"/>
</dbReference>
<dbReference type="Pfam" id="PF00842">
    <property type="entry name" value="Ala_racemase_C"/>
    <property type="match status" value="1"/>
</dbReference>
<dbReference type="Pfam" id="PF01168">
    <property type="entry name" value="Ala_racemase_N"/>
    <property type="match status" value="1"/>
</dbReference>
<dbReference type="PRINTS" id="PR00992">
    <property type="entry name" value="ALARACEMASE"/>
</dbReference>
<dbReference type="SMART" id="SM01005">
    <property type="entry name" value="Ala_racemase_C"/>
    <property type="match status" value="1"/>
</dbReference>
<dbReference type="SUPFAM" id="SSF50621">
    <property type="entry name" value="Alanine racemase C-terminal domain-like"/>
    <property type="match status" value="1"/>
</dbReference>
<dbReference type="SUPFAM" id="SSF51419">
    <property type="entry name" value="PLP-binding barrel"/>
    <property type="match status" value="1"/>
</dbReference>
<dbReference type="PROSITE" id="PS00395">
    <property type="entry name" value="ALANINE_RACEMASE"/>
    <property type="match status" value="1"/>
</dbReference>
<proteinExistence type="inferred from homology"/>
<keyword id="KW-0413">Isomerase</keyword>
<keyword id="KW-0663">Pyridoxal phosphate</keyword>
<keyword id="KW-1185">Reference proteome</keyword>
<reference key="1">
    <citation type="journal article" date="2001" name="Proc. Natl. Acad. Sci. U.S.A.">
        <title>Complete genome sequence of an M1 strain of Streptococcus pyogenes.</title>
        <authorList>
            <person name="Ferretti J.J."/>
            <person name="McShan W.M."/>
            <person name="Ajdic D.J."/>
            <person name="Savic D.J."/>
            <person name="Savic G."/>
            <person name="Lyon K."/>
            <person name="Primeaux C."/>
            <person name="Sezate S."/>
            <person name="Suvorov A.N."/>
            <person name="Kenton S."/>
            <person name="Lai H.S."/>
            <person name="Lin S.P."/>
            <person name="Qian Y."/>
            <person name="Jia H.G."/>
            <person name="Najar F.Z."/>
            <person name="Ren Q."/>
            <person name="Zhu H."/>
            <person name="Song L."/>
            <person name="White J."/>
            <person name="Yuan X."/>
            <person name="Clifton S.W."/>
            <person name="Roe B.A."/>
            <person name="McLaughlin R.E."/>
        </authorList>
    </citation>
    <scope>NUCLEOTIDE SEQUENCE [LARGE SCALE GENOMIC DNA]</scope>
    <source>
        <strain>ATCC 700294 / SF370 / Serotype M1</strain>
    </source>
</reference>
<reference key="2">
    <citation type="journal article" date="2005" name="J. Infect. Dis.">
        <title>Evolutionary origin and emergence of a highly successful clone of serotype M1 group A Streptococcus involved multiple horizontal gene transfer events.</title>
        <authorList>
            <person name="Sumby P."/>
            <person name="Porcella S.F."/>
            <person name="Madrigal A.G."/>
            <person name="Barbian K.D."/>
            <person name="Virtaneva K."/>
            <person name="Ricklefs S.M."/>
            <person name="Sturdevant D.E."/>
            <person name="Graham M.R."/>
            <person name="Vuopio-Varkila J."/>
            <person name="Hoe N.P."/>
            <person name="Musser J.M."/>
        </authorList>
    </citation>
    <scope>NUCLEOTIDE SEQUENCE [LARGE SCALE GENOMIC DNA]</scope>
    <source>
        <strain>ATCC BAA-947 / MGAS5005 / Serotype M1</strain>
    </source>
</reference>
<name>ALR_STRP1</name>
<protein>
    <recommendedName>
        <fullName evidence="1">Alanine racemase</fullName>
        <ecNumber evidence="1">5.1.1.1</ecNumber>
    </recommendedName>
</protein>
<comment type="function">
    <text evidence="1">Catalyzes the interconversion of L-alanine and D-alanine. May also act on other amino acids.</text>
</comment>
<comment type="catalytic activity">
    <reaction evidence="1">
        <text>L-alanine = D-alanine</text>
        <dbReference type="Rhea" id="RHEA:20249"/>
        <dbReference type="ChEBI" id="CHEBI:57416"/>
        <dbReference type="ChEBI" id="CHEBI:57972"/>
        <dbReference type="EC" id="5.1.1.1"/>
    </reaction>
</comment>
<comment type="cofactor">
    <cofactor evidence="1">
        <name>pyridoxal 5'-phosphate</name>
        <dbReference type="ChEBI" id="CHEBI:597326"/>
    </cofactor>
</comment>
<comment type="pathway">
    <text evidence="1">Amino-acid biosynthesis; D-alanine biosynthesis; D-alanine from L-alanine: step 1/1.</text>
</comment>
<comment type="similarity">
    <text evidence="1">Belongs to the alanine racemase family.</text>
</comment>
<accession>Q99Y98</accession>
<accession>Q48WX5</accession>
<evidence type="ECO:0000255" key="1">
    <source>
        <dbReference type="HAMAP-Rule" id="MF_01201"/>
    </source>
</evidence>
<feature type="chain" id="PRO_0000114583" description="Alanine racemase">
    <location>
        <begin position="1"/>
        <end position="366"/>
    </location>
</feature>
<feature type="active site" description="Proton acceptor; specific for D-alanine" evidence="1">
    <location>
        <position position="40"/>
    </location>
</feature>
<feature type="active site" description="Proton acceptor; specific for L-alanine" evidence="1">
    <location>
        <position position="263"/>
    </location>
</feature>
<feature type="binding site" evidence="1">
    <location>
        <position position="136"/>
    </location>
    <ligand>
        <name>substrate</name>
    </ligand>
</feature>
<feature type="binding site" evidence="1">
    <location>
        <position position="310"/>
    </location>
    <ligand>
        <name>substrate</name>
    </ligand>
</feature>
<feature type="modified residue" description="N6-(pyridoxal phosphate)lysine" evidence="1">
    <location>
        <position position="40"/>
    </location>
</feature>
<gene>
    <name type="primary">alr</name>
    <name type="ordered locus">SPy_1802</name>
    <name type="ordered locus">M5005_Spy1532</name>
</gene>
<sequence>MISSFHRPTVARVNLQAIKENVASVQKHIPLGVKTYAVVKADAYGHGAVQVSKALLPQVDGYCVSNLDEALQLRQAGIDKEILILGVLLPNELELAVANAITVTIASLDWIALARLEKKECQGLKVHVKVDSGMGRIGLRSSKEVNLLIDSLKELGADVEGIFTHFATADEADDTKFNQQLQFFKKLIAGLEDKPRLVHASNSATSIWHSDTIFNAVRLGIVSYGLNPSGSDLSLPFPLQEALSLESSLVHVKMISAGDTVGYGATYTAKKSEYVGTVPIGYADGWTRNMQGFSVLVDGQFCEIIGRVSMDQLTIRLPKAYPLGTKVTLIGSNQQKNISTTDIANYRNTINYEVLCLLSDRIPRIY</sequence>